<sequence length="346" mass="38027">MTVVIPEYITPLIPWVRGIVGLVLIGVIFMGAMGAVWLERKLSADIQTRMGPCRVGKYGLLQLVADAIKLFTKEDLKPLNADSLLFNNANIFMLGSVFLMLVALPVGAVFINGVEYPLAVTQMDISVLYIEAVSALSIFGIFMVAYGSNNKYSLLGAFRNFARMVGYEVPLGITVISVAAMTGSLNIVDISTAQGLHWNIFLQPLGCFVFFVSLMADMGRLPFDQNESEEELIAGWITEYCGMRFGLGFFAEYIHMILGSFLVALLFLGGWNVPGFIANNSFFGIIVPTGFLIVKVVFVLMVIIGLRWAVPRFRIDQVVDLSWKKLLPLALLNLVWAVGLGLYLGA</sequence>
<protein>
    <recommendedName>
        <fullName evidence="1">F(420)H(2) dehydrogenase subunit H</fullName>
        <ecNumber evidence="1">1.5.98.3</ecNumber>
    </recommendedName>
    <alternativeName>
        <fullName evidence="1">F(420)H(2)-dependent phenazine dehydrogenase subunit H</fullName>
    </alternativeName>
    <alternativeName>
        <fullName evidence="1">F(420)H(2)-dependent phenazine oxidoreductase subunit H</fullName>
        <shortName evidence="1">FPO subunit H</shortName>
    </alternativeName>
</protein>
<evidence type="ECO:0000255" key="1">
    <source>
        <dbReference type="HAMAP-Rule" id="MF_01350"/>
    </source>
</evidence>
<proteinExistence type="inferred from homology"/>
<keyword id="KW-1003">Cell membrane</keyword>
<keyword id="KW-0249">Electron transport</keyword>
<keyword id="KW-0472">Membrane</keyword>
<keyword id="KW-0484">Methanogenesis</keyword>
<keyword id="KW-0485">Methanol utilization</keyword>
<keyword id="KW-0560">Oxidoreductase</keyword>
<keyword id="KW-0812">Transmembrane</keyword>
<keyword id="KW-1133">Transmembrane helix</keyword>
<keyword id="KW-0813">Transport</keyword>
<comment type="function">
    <text evidence="1">Component of the F(420)H(2) dehydrogenase (FPO complex) which is part of the energy-conserving F(420)H(2):heterodisulfide oxidoreductase system. The membrane-bound electron transfer system of the complex plays an important role in the metabolism of methylotrophic methanogens when the organisms grow on methanol or methylamines. Catalyzes the oxidation of methanophenazine to dihydromethanophenazine. It shuttles electrons from F(420)H(2), via FAD and iron-sulfur (Fe-S) centers, to methanophenazine (an electron carrier in the membrane). It couples the redox reaction to proton translocation (for every two electrons transferred, two hydrogen ions are translocated across the cytoplasmic membrane), and thus conserves the redox energy in a proton gradient.</text>
</comment>
<comment type="catalytic activity">
    <reaction evidence="1">
        <text>methanophenazine + reduced coenzyme F420-(gamma-L-Glu)(n) = dihydromethanophenazine + oxidized coenzyme F420-(gamma-L-Glu)(n) + H(+)</text>
        <dbReference type="Rhea" id="RHEA:54752"/>
        <dbReference type="Rhea" id="RHEA-COMP:12939"/>
        <dbReference type="Rhea" id="RHEA-COMP:14378"/>
        <dbReference type="ChEBI" id="CHEBI:15378"/>
        <dbReference type="ChEBI" id="CHEBI:29118"/>
        <dbReference type="ChEBI" id="CHEBI:50375"/>
        <dbReference type="ChEBI" id="CHEBI:133980"/>
        <dbReference type="ChEBI" id="CHEBI:139511"/>
        <dbReference type="EC" id="1.5.98.3"/>
    </reaction>
</comment>
<comment type="subunit">
    <text evidence="1">The FPO complex is composed of at least 13 different subunits. FpoA, FpoH, FpoJ, FpoK, FpoL, FpoM and FpoN proteins constitute the membrane sector of the complex.</text>
</comment>
<comment type="subcellular location">
    <subcellularLocation>
        <location evidence="1">Cell membrane</location>
        <topology evidence="1">Multi-pass membrane protein</topology>
    </subcellularLocation>
</comment>
<comment type="similarity">
    <text evidence="1">Belongs to the complex I subunit 1 family.</text>
</comment>
<name>FPOH_METBF</name>
<feature type="chain" id="PRO_0000240122" description="F(420)H(2) dehydrogenase subunit H">
    <location>
        <begin position="1"/>
        <end position="346"/>
    </location>
</feature>
<feature type="transmembrane region" description="Helical" evidence="1">
    <location>
        <begin position="18"/>
        <end position="38"/>
    </location>
</feature>
<feature type="transmembrane region" description="Helical" evidence="1">
    <location>
        <begin position="91"/>
        <end position="111"/>
    </location>
</feature>
<feature type="transmembrane region" description="Helical" evidence="1">
    <location>
        <begin position="125"/>
        <end position="145"/>
    </location>
</feature>
<feature type="transmembrane region" description="Helical" evidence="1">
    <location>
        <begin position="170"/>
        <end position="190"/>
    </location>
</feature>
<feature type="transmembrane region" description="Helical" evidence="1">
    <location>
        <begin position="196"/>
        <end position="216"/>
    </location>
</feature>
<feature type="transmembrane region" description="Helical" evidence="1">
    <location>
        <begin position="257"/>
        <end position="277"/>
    </location>
</feature>
<feature type="transmembrane region" description="Helical" evidence="1">
    <location>
        <begin position="284"/>
        <end position="304"/>
    </location>
</feature>
<feature type="transmembrane region" description="Helical" evidence="1">
    <location>
        <begin position="326"/>
        <end position="346"/>
    </location>
</feature>
<accession>Q466B1</accession>
<dbReference type="EC" id="1.5.98.3" evidence="1"/>
<dbReference type="EMBL" id="CP000099">
    <property type="protein sequence ID" value="AAZ72281.1"/>
    <property type="molecule type" value="Genomic_DNA"/>
</dbReference>
<dbReference type="SMR" id="Q466B1"/>
<dbReference type="STRING" id="269797.Mbar_A3408"/>
<dbReference type="PaxDb" id="269797-Mbar_A3408"/>
<dbReference type="KEGG" id="mba:Mbar_A3408"/>
<dbReference type="eggNOG" id="arCOG01546">
    <property type="taxonomic scope" value="Archaea"/>
</dbReference>
<dbReference type="HOGENOM" id="CLU_015134_0_1_2"/>
<dbReference type="OrthoDB" id="15253at2157"/>
<dbReference type="GO" id="GO:0005886">
    <property type="term" value="C:plasma membrane"/>
    <property type="evidence" value="ECO:0007669"/>
    <property type="project" value="UniProtKB-SubCell"/>
</dbReference>
<dbReference type="GO" id="GO:0051911">
    <property type="term" value="F:Methanosarcina-phenazine hydrogenase activity"/>
    <property type="evidence" value="ECO:0007669"/>
    <property type="project" value="UniProtKB-EC"/>
</dbReference>
<dbReference type="GO" id="GO:0003954">
    <property type="term" value="F:NADH dehydrogenase activity"/>
    <property type="evidence" value="ECO:0007669"/>
    <property type="project" value="TreeGrafter"/>
</dbReference>
<dbReference type="GO" id="GO:0043738">
    <property type="term" value="F:reduced coenzyme F420 dehydrogenase activity"/>
    <property type="evidence" value="ECO:0007669"/>
    <property type="project" value="RHEA"/>
</dbReference>
<dbReference type="GO" id="GO:0009060">
    <property type="term" value="P:aerobic respiration"/>
    <property type="evidence" value="ECO:0007669"/>
    <property type="project" value="TreeGrafter"/>
</dbReference>
<dbReference type="GO" id="GO:0015948">
    <property type="term" value="P:methanogenesis"/>
    <property type="evidence" value="ECO:0007669"/>
    <property type="project" value="UniProtKB-KW"/>
</dbReference>
<dbReference type="GO" id="GO:0015945">
    <property type="term" value="P:methanol metabolic process"/>
    <property type="evidence" value="ECO:0007669"/>
    <property type="project" value="UniProtKB-KW"/>
</dbReference>
<dbReference type="HAMAP" id="MF_01350">
    <property type="entry name" value="NDH1_NuoH"/>
    <property type="match status" value="1"/>
</dbReference>
<dbReference type="InterPro" id="IPR053455">
    <property type="entry name" value="F420H2_dehydrogenase_H"/>
</dbReference>
<dbReference type="InterPro" id="IPR001694">
    <property type="entry name" value="NADH_UbQ_OxRdtase_su1/FPO"/>
</dbReference>
<dbReference type="InterPro" id="IPR018086">
    <property type="entry name" value="NADH_UbQ_OxRdtase_su1_CS"/>
</dbReference>
<dbReference type="NCBIfam" id="NF040610">
    <property type="entry name" value="F420_dehyd_FpoH"/>
    <property type="match status" value="1"/>
</dbReference>
<dbReference type="PANTHER" id="PTHR11432">
    <property type="entry name" value="NADH DEHYDROGENASE SUBUNIT 1"/>
    <property type="match status" value="1"/>
</dbReference>
<dbReference type="PANTHER" id="PTHR11432:SF3">
    <property type="entry name" value="NADH-UBIQUINONE OXIDOREDUCTASE CHAIN 1"/>
    <property type="match status" value="1"/>
</dbReference>
<dbReference type="Pfam" id="PF00146">
    <property type="entry name" value="NADHdh"/>
    <property type="match status" value="1"/>
</dbReference>
<dbReference type="PROSITE" id="PS00667">
    <property type="entry name" value="COMPLEX1_ND1_1"/>
    <property type="match status" value="1"/>
</dbReference>
<organism>
    <name type="scientific">Methanosarcina barkeri (strain Fusaro / DSM 804)</name>
    <dbReference type="NCBI Taxonomy" id="269797"/>
    <lineage>
        <taxon>Archaea</taxon>
        <taxon>Methanobacteriati</taxon>
        <taxon>Methanobacteriota</taxon>
        <taxon>Stenosarchaea group</taxon>
        <taxon>Methanomicrobia</taxon>
        <taxon>Methanosarcinales</taxon>
        <taxon>Methanosarcinaceae</taxon>
        <taxon>Methanosarcina</taxon>
    </lineage>
</organism>
<gene>
    <name evidence="1" type="primary">fpoH</name>
    <name type="ordered locus">Mbar_A3408</name>
</gene>
<reference key="1">
    <citation type="journal article" date="2006" name="J. Bacteriol.">
        <title>The Methanosarcina barkeri genome: comparative analysis with Methanosarcina acetivorans and Methanosarcina mazei reveals extensive rearrangement within methanosarcinal genomes.</title>
        <authorList>
            <person name="Maeder D.L."/>
            <person name="Anderson I."/>
            <person name="Brettin T.S."/>
            <person name="Bruce D.C."/>
            <person name="Gilna P."/>
            <person name="Han C.S."/>
            <person name="Lapidus A."/>
            <person name="Metcalf W.W."/>
            <person name="Saunders E."/>
            <person name="Tapia R."/>
            <person name="Sowers K.R."/>
        </authorList>
    </citation>
    <scope>NUCLEOTIDE SEQUENCE [LARGE SCALE GENOMIC DNA]</scope>
    <source>
        <strain>Fusaro / DSM 804</strain>
    </source>
</reference>